<keyword id="KW-0028">Amino-acid biosynthesis</keyword>
<keyword id="KW-0963">Cytoplasm</keyword>
<keyword id="KW-0413">Isomerase</keyword>
<keyword id="KW-0486">Methionine biosynthesis</keyword>
<keyword id="KW-0539">Nucleus</keyword>
<keyword id="KW-1185">Reference proteome</keyword>
<proteinExistence type="inferred from homology"/>
<sequence>MASTAKTLQAIKFDKENISLQILDQLLLPYTTHYLDIKTIEDAFSAIRLMQVRGAPAIAIVGAFAVVVDTNASLKNGGNKTVSKLFDSIDYLETSRPTAVNLANALNDIKKLVSAKFGQNDLVDEDVYQIIYKYSVALYEDDLANNFKIGANGLNYIVETLKKDGFKGAFSIVTICNTGSLATSGHGTALGIIRSTYDKLKKSESSEEFWLDHVYPCETRPYNQGAKLTTYELHYEQIPFTLICDNMVSSLVNTLSSNKNIQDNAAAPVKFIIVGADRVVKNGDTANKIGTFQLSTIANFFNSNKLSGSANKIKFIVAAPRTTIDLNTATGDEIVIEERPANELTTLKGPVLREDGSIGDKYTVGIATPGISVWNPAFDVTPHALIDAIVTEEEKVYTKNSHGEFELSK</sequence>
<comment type="function">
    <text evidence="1">Catalyzes the interconversion of methylthioribose-1-phosphate (MTR-1-P) into methylthioribulose-1-phosphate (MTRu-1-P).</text>
</comment>
<comment type="catalytic activity">
    <reaction evidence="1">
        <text>5-(methylsulfanyl)-alpha-D-ribose 1-phosphate = 5-(methylsulfanyl)-D-ribulose 1-phosphate</text>
        <dbReference type="Rhea" id="RHEA:19989"/>
        <dbReference type="ChEBI" id="CHEBI:58533"/>
        <dbReference type="ChEBI" id="CHEBI:58548"/>
        <dbReference type="EC" id="5.3.1.23"/>
    </reaction>
</comment>
<comment type="pathway">
    <text evidence="1">Amino-acid biosynthesis; L-methionine biosynthesis via salvage pathway; L-methionine from S-methyl-5-thio-alpha-D-ribose 1-phosphate: step 1/6.</text>
</comment>
<comment type="subcellular location">
    <subcellularLocation>
        <location evidence="1">Cytoplasm</location>
    </subcellularLocation>
    <subcellularLocation>
        <location evidence="1">Nucleus</location>
    </subcellularLocation>
</comment>
<comment type="similarity">
    <text evidence="1">Belongs to the eIF-2B alpha/beta/delta subunits family. MtnA subfamily.</text>
</comment>
<name>MTNA_PICST</name>
<organism>
    <name type="scientific">Scheffersomyces stipitis (strain ATCC 58785 / CBS 6054 / NBRC 10063 / NRRL Y-11545)</name>
    <name type="common">Yeast</name>
    <name type="synonym">Pichia stipitis</name>
    <dbReference type="NCBI Taxonomy" id="322104"/>
    <lineage>
        <taxon>Eukaryota</taxon>
        <taxon>Fungi</taxon>
        <taxon>Dikarya</taxon>
        <taxon>Ascomycota</taxon>
        <taxon>Saccharomycotina</taxon>
        <taxon>Pichiomycetes</taxon>
        <taxon>Debaryomycetaceae</taxon>
        <taxon>Scheffersomyces</taxon>
    </lineage>
</organism>
<dbReference type="EC" id="5.3.1.23" evidence="1"/>
<dbReference type="EMBL" id="CP000496">
    <property type="protein sequence ID" value="ABN64783.2"/>
    <property type="molecule type" value="Genomic_DNA"/>
</dbReference>
<dbReference type="RefSeq" id="XP_001382812.2">
    <property type="nucleotide sequence ID" value="XM_001382775.1"/>
</dbReference>
<dbReference type="SMR" id="A3LN21"/>
<dbReference type="FunCoup" id="A3LN21">
    <property type="interactions" value="747"/>
</dbReference>
<dbReference type="STRING" id="322104.A3LN21"/>
<dbReference type="GeneID" id="4837097"/>
<dbReference type="KEGG" id="pic:PICST_40776"/>
<dbReference type="eggNOG" id="KOG1468">
    <property type="taxonomic scope" value="Eukaryota"/>
</dbReference>
<dbReference type="HOGENOM" id="CLU_016218_1_3_1"/>
<dbReference type="InParanoid" id="A3LN21"/>
<dbReference type="OMA" id="CETRPLN"/>
<dbReference type="OrthoDB" id="2461at2759"/>
<dbReference type="UniPathway" id="UPA00904">
    <property type="reaction ID" value="UER00874"/>
</dbReference>
<dbReference type="Proteomes" id="UP000002258">
    <property type="component" value="Chromosome 2"/>
</dbReference>
<dbReference type="GO" id="GO:0005737">
    <property type="term" value="C:cytoplasm"/>
    <property type="evidence" value="ECO:0007669"/>
    <property type="project" value="UniProtKB-SubCell"/>
</dbReference>
<dbReference type="GO" id="GO:0005634">
    <property type="term" value="C:nucleus"/>
    <property type="evidence" value="ECO:0007669"/>
    <property type="project" value="UniProtKB-SubCell"/>
</dbReference>
<dbReference type="GO" id="GO:0046523">
    <property type="term" value="F:S-methyl-5-thioribose-1-phosphate isomerase activity"/>
    <property type="evidence" value="ECO:0007669"/>
    <property type="project" value="UniProtKB-UniRule"/>
</dbReference>
<dbReference type="GO" id="GO:0019509">
    <property type="term" value="P:L-methionine salvage from methylthioadenosine"/>
    <property type="evidence" value="ECO:0007669"/>
    <property type="project" value="UniProtKB-UniRule"/>
</dbReference>
<dbReference type="FunFam" id="1.20.120.420:FF:000003">
    <property type="entry name" value="Methylthioribose-1-phosphate isomerase"/>
    <property type="match status" value="1"/>
</dbReference>
<dbReference type="Gene3D" id="1.20.120.420">
    <property type="entry name" value="translation initiation factor eif-2b, domain 1"/>
    <property type="match status" value="1"/>
</dbReference>
<dbReference type="Gene3D" id="3.40.50.10470">
    <property type="entry name" value="Translation initiation factor eif-2b, domain 2"/>
    <property type="match status" value="1"/>
</dbReference>
<dbReference type="HAMAP" id="MF_01678">
    <property type="entry name" value="Salvage_MtnA"/>
    <property type="match status" value="1"/>
</dbReference>
<dbReference type="InterPro" id="IPR000649">
    <property type="entry name" value="IF-2B-related"/>
</dbReference>
<dbReference type="InterPro" id="IPR005251">
    <property type="entry name" value="IF-M1Pi"/>
</dbReference>
<dbReference type="InterPro" id="IPR042529">
    <property type="entry name" value="IF_2B-like_C"/>
</dbReference>
<dbReference type="InterPro" id="IPR011559">
    <property type="entry name" value="Initiation_fac_2B_a/b/d"/>
</dbReference>
<dbReference type="InterPro" id="IPR027363">
    <property type="entry name" value="M1Pi_N"/>
</dbReference>
<dbReference type="InterPro" id="IPR037171">
    <property type="entry name" value="NagB/RpiA_transferase-like"/>
</dbReference>
<dbReference type="NCBIfam" id="TIGR00524">
    <property type="entry name" value="eIF-2B_rel"/>
    <property type="match status" value="1"/>
</dbReference>
<dbReference type="NCBIfam" id="NF004326">
    <property type="entry name" value="PRK05720.1"/>
    <property type="match status" value="1"/>
</dbReference>
<dbReference type="NCBIfam" id="TIGR00512">
    <property type="entry name" value="salvage_mtnA"/>
    <property type="match status" value="1"/>
</dbReference>
<dbReference type="PANTHER" id="PTHR43475">
    <property type="entry name" value="METHYLTHIORIBOSE-1-PHOSPHATE ISOMERASE"/>
    <property type="match status" value="1"/>
</dbReference>
<dbReference type="PANTHER" id="PTHR43475:SF1">
    <property type="entry name" value="METHYLTHIORIBOSE-1-PHOSPHATE ISOMERASE"/>
    <property type="match status" value="1"/>
</dbReference>
<dbReference type="Pfam" id="PF01008">
    <property type="entry name" value="IF-2B"/>
    <property type="match status" value="1"/>
</dbReference>
<dbReference type="SUPFAM" id="SSF100950">
    <property type="entry name" value="NagB/RpiA/CoA transferase-like"/>
    <property type="match status" value="1"/>
</dbReference>
<feature type="chain" id="PRO_0000402043" description="Methylthioribose-1-phosphate isomerase">
    <location>
        <begin position="1"/>
        <end position="409"/>
    </location>
</feature>
<feature type="active site" description="Proton donor" evidence="1">
    <location>
        <position position="277"/>
    </location>
</feature>
<feature type="site" description="Transition state stabilizer" evidence="1">
    <location>
        <position position="176"/>
    </location>
</feature>
<gene>
    <name evidence="1" type="primary">MRI1</name>
    <name type="ORF">PICST_40776</name>
</gene>
<evidence type="ECO:0000255" key="1">
    <source>
        <dbReference type="HAMAP-Rule" id="MF_03119"/>
    </source>
</evidence>
<accession>A3LN21</accession>
<protein>
    <recommendedName>
        <fullName evidence="1">Methylthioribose-1-phosphate isomerase</fullName>
        <shortName evidence="1">M1Pi</shortName>
        <shortName evidence="1">MTR-1-P isomerase</shortName>
        <ecNumber evidence="1">5.3.1.23</ecNumber>
    </recommendedName>
    <alternativeName>
        <fullName evidence="1">S-methyl-5-thioribose-1-phosphate isomerase</fullName>
    </alternativeName>
    <alternativeName>
        <fullName evidence="1">Translation initiation factor eIF-2B subunit alpha/beta/delta-like protein</fullName>
    </alternativeName>
</protein>
<reference key="1">
    <citation type="journal article" date="2007" name="Nat. Biotechnol.">
        <title>Genome sequence of the lignocellulose-bioconverting and xylose-fermenting yeast Pichia stipitis.</title>
        <authorList>
            <person name="Jeffries T.W."/>
            <person name="Grigoriev I.V."/>
            <person name="Grimwood J."/>
            <person name="Laplaza J.M."/>
            <person name="Aerts A."/>
            <person name="Salamov A."/>
            <person name="Schmutz J."/>
            <person name="Lindquist E."/>
            <person name="Dehal P."/>
            <person name="Shapiro H."/>
            <person name="Jin Y.-S."/>
            <person name="Passoth V."/>
            <person name="Richardson P.M."/>
        </authorList>
    </citation>
    <scope>NUCLEOTIDE SEQUENCE [LARGE SCALE GENOMIC DNA]</scope>
    <source>
        <strain>ATCC 58785 / CBS 6054 / NBRC 10063 / NRRL Y-11545</strain>
    </source>
</reference>